<accession>Q7LZK6</accession>
<sequence>DCPSGWSSFKQYCYKPFKQLKTWEDAERFCLEQVKGAHLV</sequence>
<reference key="1">
    <citation type="journal article" date="1995" name="Biochem. J.">
        <title>Tokaracetin, a new platelet antagonist that binds to platelet glycoprotein Ib and inhibits von Willebrand factor-dependent shear-induced platelet aggregation.</title>
        <authorList>
            <person name="Kawasaki T."/>
            <person name="Taniuchi Y."/>
            <person name="Hisamichi N."/>
            <person name="Fujimura Y."/>
            <person name="Suzuki M."/>
            <person name="Titani K."/>
            <person name="Sakai Y."/>
            <person name="Kaku S."/>
            <person name="Satoh N."/>
            <person name="Takenaka T."/>
            <person name="Handa M."/>
            <person name="Sawai Y."/>
        </authorList>
    </citation>
    <scope>PROTEIN SEQUENCE</scope>
    <scope>FUNCTION</scope>
    <scope>SUBUNIT</scope>
    <source>
        <tissue>Venom</tissue>
    </source>
</reference>
<protein>
    <recommendedName>
        <fullName>Snaclec tokaracetin subunit alpha</fullName>
    </recommendedName>
</protein>
<evidence type="ECO:0000255" key="1">
    <source>
        <dbReference type="PROSITE-ProRule" id="PRU00040"/>
    </source>
</evidence>
<evidence type="ECO:0000269" key="2">
    <source>
    </source>
</evidence>
<evidence type="ECO:0000305" key="3"/>
<organism>
    <name type="scientific">Protobothrops tokarensis</name>
    <name type="common">Tokara habu</name>
    <name type="synonym">Trimeresurus tokarensis</name>
    <dbReference type="NCBI Taxonomy" id="61225"/>
    <lineage>
        <taxon>Eukaryota</taxon>
        <taxon>Metazoa</taxon>
        <taxon>Chordata</taxon>
        <taxon>Craniata</taxon>
        <taxon>Vertebrata</taxon>
        <taxon>Euteleostomi</taxon>
        <taxon>Lepidosauria</taxon>
        <taxon>Squamata</taxon>
        <taxon>Bifurcata</taxon>
        <taxon>Unidentata</taxon>
        <taxon>Episquamata</taxon>
        <taxon>Toxicofera</taxon>
        <taxon>Serpentes</taxon>
        <taxon>Colubroidea</taxon>
        <taxon>Viperidae</taxon>
        <taxon>Crotalinae</taxon>
        <taxon>Protobothrops</taxon>
    </lineage>
</organism>
<keyword id="KW-0903">Direct protein sequencing</keyword>
<keyword id="KW-1015">Disulfide bond</keyword>
<keyword id="KW-1199">Hemostasis impairing toxin</keyword>
<keyword id="KW-1201">Platelet aggregation inhibiting toxin</keyword>
<keyword id="KW-0964">Secreted</keyword>
<keyword id="KW-0800">Toxin</keyword>
<feature type="chain" id="PRO_0000355287" description="Snaclec tokaracetin subunit alpha">
    <location>
        <begin position="1"/>
        <end position="40" status="greater than"/>
    </location>
</feature>
<feature type="domain" description="C-type lectin" evidence="1">
    <location>
        <begin position="1"/>
        <end position="40" status="greater than"/>
    </location>
</feature>
<feature type="disulfide bond" evidence="1">
    <location>
        <begin position="2"/>
        <end position="13"/>
    </location>
</feature>
<feature type="non-terminal residue">
    <location>
        <position position="40"/>
    </location>
</feature>
<comment type="function">
    <text evidence="2">Platelet antagonist that specifically and reversibly binds to a site on platelet glycoprotein Ibalpha (GP1BA) close to or identical with the site for vWF binding. It inhibits the binding of vWF to platelets and vWF-dependent shear-induced platelet aggregation.</text>
</comment>
<comment type="subunit">
    <text evidence="2">Heterodimer of subunits alpha and beta; disulfide-linked.</text>
</comment>
<comment type="subcellular location">
    <subcellularLocation>
        <location>Secreted</location>
    </subcellularLocation>
</comment>
<comment type="tissue specificity">
    <text>Expressed by the venom gland.</text>
</comment>
<comment type="similarity">
    <text evidence="3">Belongs to the snaclec family.</text>
</comment>
<name>SLA_PROTO</name>
<proteinExistence type="evidence at protein level"/>
<dbReference type="PIR" id="S56006">
    <property type="entry name" value="S56006"/>
</dbReference>
<dbReference type="SMR" id="Q7LZK6"/>
<dbReference type="GO" id="GO:0005576">
    <property type="term" value="C:extracellular region"/>
    <property type="evidence" value="ECO:0007669"/>
    <property type="project" value="UniProtKB-SubCell"/>
</dbReference>
<dbReference type="GO" id="GO:0090729">
    <property type="term" value="F:toxin activity"/>
    <property type="evidence" value="ECO:0007669"/>
    <property type="project" value="UniProtKB-KW"/>
</dbReference>
<dbReference type="Gene3D" id="3.10.100.10">
    <property type="entry name" value="Mannose-Binding Protein A, subunit A"/>
    <property type="match status" value="1"/>
</dbReference>
<dbReference type="InterPro" id="IPR016186">
    <property type="entry name" value="C-type_lectin-like/link_sf"/>
</dbReference>
<dbReference type="InterPro" id="IPR016187">
    <property type="entry name" value="CTDL_fold"/>
</dbReference>
<dbReference type="SUPFAM" id="SSF56436">
    <property type="entry name" value="C-type lectin-like"/>
    <property type="match status" value="1"/>
</dbReference>